<accession>B4TGJ6</accession>
<keyword id="KW-0028">Amino-acid biosynthesis</keyword>
<keyword id="KW-0057">Aromatic amino acid biosynthesis</keyword>
<keyword id="KW-0456">Lyase</keyword>
<keyword id="KW-0704">Schiff base</keyword>
<protein>
    <recommendedName>
        <fullName evidence="1">3-dehydroquinate dehydratase</fullName>
        <shortName evidence="1">3-dehydroquinase</shortName>
        <ecNumber evidence="1">4.2.1.10</ecNumber>
    </recommendedName>
    <alternativeName>
        <fullName evidence="1">Type I DHQase</fullName>
    </alternativeName>
    <alternativeName>
        <fullName evidence="1">Type I dehydroquinase</fullName>
        <shortName evidence="1">DHQ1</shortName>
    </alternativeName>
</protein>
<evidence type="ECO:0000255" key="1">
    <source>
        <dbReference type="HAMAP-Rule" id="MF_00214"/>
    </source>
</evidence>
<dbReference type="EC" id="4.2.1.10" evidence="1"/>
<dbReference type="EMBL" id="CP001120">
    <property type="protein sequence ID" value="ACF68327.1"/>
    <property type="molecule type" value="Genomic_DNA"/>
</dbReference>
<dbReference type="RefSeq" id="WP_000860224.1">
    <property type="nucleotide sequence ID" value="NC_011083.1"/>
</dbReference>
<dbReference type="SMR" id="B4TGJ6"/>
<dbReference type="KEGG" id="seh:SeHA_C1489"/>
<dbReference type="HOGENOM" id="CLU_064444_0_0_6"/>
<dbReference type="UniPathway" id="UPA00053">
    <property type="reaction ID" value="UER00086"/>
</dbReference>
<dbReference type="Proteomes" id="UP000001866">
    <property type="component" value="Chromosome"/>
</dbReference>
<dbReference type="GO" id="GO:0003855">
    <property type="term" value="F:3-dehydroquinate dehydratase activity"/>
    <property type="evidence" value="ECO:0007669"/>
    <property type="project" value="UniProtKB-UniRule"/>
</dbReference>
<dbReference type="GO" id="GO:0046279">
    <property type="term" value="P:3,4-dihydroxybenzoate biosynthetic process"/>
    <property type="evidence" value="ECO:0007669"/>
    <property type="project" value="TreeGrafter"/>
</dbReference>
<dbReference type="GO" id="GO:0008652">
    <property type="term" value="P:amino acid biosynthetic process"/>
    <property type="evidence" value="ECO:0007669"/>
    <property type="project" value="UniProtKB-KW"/>
</dbReference>
<dbReference type="GO" id="GO:0009073">
    <property type="term" value="P:aromatic amino acid family biosynthetic process"/>
    <property type="evidence" value="ECO:0007669"/>
    <property type="project" value="UniProtKB-KW"/>
</dbReference>
<dbReference type="GO" id="GO:0009423">
    <property type="term" value="P:chorismate biosynthetic process"/>
    <property type="evidence" value="ECO:0007669"/>
    <property type="project" value="UniProtKB-UniRule"/>
</dbReference>
<dbReference type="CDD" id="cd00502">
    <property type="entry name" value="DHQase_I"/>
    <property type="match status" value="1"/>
</dbReference>
<dbReference type="FunFam" id="3.20.20.70:FF:000047">
    <property type="entry name" value="3-dehydroquinate dehydratase"/>
    <property type="match status" value="1"/>
</dbReference>
<dbReference type="Gene3D" id="3.20.20.70">
    <property type="entry name" value="Aldolase class I"/>
    <property type="match status" value="1"/>
</dbReference>
<dbReference type="HAMAP" id="MF_00214">
    <property type="entry name" value="AroD"/>
    <property type="match status" value="1"/>
</dbReference>
<dbReference type="InterPro" id="IPR018508">
    <property type="entry name" value="3-dehydroquinate_DH_AS"/>
</dbReference>
<dbReference type="InterPro" id="IPR013785">
    <property type="entry name" value="Aldolase_TIM"/>
</dbReference>
<dbReference type="InterPro" id="IPR001381">
    <property type="entry name" value="DHquinase_I"/>
</dbReference>
<dbReference type="InterPro" id="IPR050146">
    <property type="entry name" value="Type-I_3-dehydroquinase"/>
</dbReference>
<dbReference type="NCBIfam" id="TIGR01093">
    <property type="entry name" value="aroD"/>
    <property type="match status" value="1"/>
</dbReference>
<dbReference type="PANTHER" id="PTHR43699">
    <property type="entry name" value="3-DEHYDROQUINATE DEHYDRATASE"/>
    <property type="match status" value="1"/>
</dbReference>
<dbReference type="PANTHER" id="PTHR43699:SF1">
    <property type="entry name" value="3-DEHYDROQUINATE DEHYDRATASE"/>
    <property type="match status" value="1"/>
</dbReference>
<dbReference type="Pfam" id="PF01487">
    <property type="entry name" value="DHquinase_I"/>
    <property type="match status" value="1"/>
</dbReference>
<dbReference type="SUPFAM" id="SSF51569">
    <property type="entry name" value="Aldolase"/>
    <property type="match status" value="1"/>
</dbReference>
<dbReference type="PROSITE" id="PS01028">
    <property type="entry name" value="DEHYDROQUINASE_I"/>
    <property type="match status" value="1"/>
</dbReference>
<comment type="function">
    <text evidence="1">Involved in the third step of the chorismate pathway, which leads to the biosynthesis of aromatic amino acids. Catalyzes the cis-dehydration of 3-dehydroquinate (DHQ) and introduces the first double bond of the aromatic ring to yield 3-dehydroshikimate.</text>
</comment>
<comment type="catalytic activity">
    <reaction evidence="1">
        <text>3-dehydroquinate = 3-dehydroshikimate + H2O</text>
        <dbReference type="Rhea" id="RHEA:21096"/>
        <dbReference type="ChEBI" id="CHEBI:15377"/>
        <dbReference type="ChEBI" id="CHEBI:16630"/>
        <dbReference type="ChEBI" id="CHEBI:32364"/>
        <dbReference type="EC" id="4.2.1.10"/>
    </reaction>
</comment>
<comment type="pathway">
    <text evidence="1">Metabolic intermediate biosynthesis; chorismate biosynthesis; chorismate from D-erythrose 4-phosphate and phosphoenolpyruvate: step 3/7.</text>
</comment>
<comment type="subunit">
    <text evidence="1">Homodimer.</text>
</comment>
<comment type="similarity">
    <text evidence="1">Belongs to the type-I 3-dehydroquinase family.</text>
</comment>
<name>AROD_SALHS</name>
<sequence>MKTVTVRDLVVGEGAPKIIVSLMGKTITDVKSEALAYREADFDILEWRVDHFANVTTAESVLEAAGAIREIITDKPLLFTFRSAKEGGEQALTTGQYIALNRAAVDSGLVDMIDLELFTGDDEVKATVGYAHQHNVAVIMSNHDFHKTPAAEEIVQRLRKMQELGADIPKIAVMPQTKADVLTLLTATVEMQERYADRPIITMSMSKTGVISRLAGEVFGSAATFGAVKKASAPGQISVADLRTVLTILHQA</sequence>
<reference key="1">
    <citation type="journal article" date="2011" name="J. Bacteriol.">
        <title>Comparative genomics of 28 Salmonella enterica isolates: evidence for CRISPR-mediated adaptive sublineage evolution.</title>
        <authorList>
            <person name="Fricke W.F."/>
            <person name="Mammel M.K."/>
            <person name="McDermott P.F."/>
            <person name="Tartera C."/>
            <person name="White D.G."/>
            <person name="Leclerc J.E."/>
            <person name="Ravel J."/>
            <person name="Cebula T.A."/>
        </authorList>
    </citation>
    <scope>NUCLEOTIDE SEQUENCE [LARGE SCALE GENOMIC DNA]</scope>
    <source>
        <strain>SL476</strain>
    </source>
</reference>
<organism>
    <name type="scientific">Salmonella heidelberg (strain SL476)</name>
    <dbReference type="NCBI Taxonomy" id="454169"/>
    <lineage>
        <taxon>Bacteria</taxon>
        <taxon>Pseudomonadati</taxon>
        <taxon>Pseudomonadota</taxon>
        <taxon>Gammaproteobacteria</taxon>
        <taxon>Enterobacterales</taxon>
        <taxon>Enterobacteriaceae</taxon>
        <taxon>Salmonella</taxon>
    </lineage>
</organism>
<proteinExistence type="inferred from homology"/>
<gene>
    <name evidence="1" type="primary">aroD</name>
    <name type="ordered locus">SeHA_C1489</name>
</gene>
<feature type="chain" id="PRO_1000099916" description="3-dehydroquinate dehydratase">
    <location>
        <begin position="1"/>
        <end position="252"/>
    </location>
</feature>
<feature type="active site" description="Proton donor/acceptor" evidence="1">
    <location>
        <position position="143"/>
    </location>
</feature>
<feature type="active site" description="Schiff-base intermediate with substrate" evidence="1">
    <location>
        <position position="170"/>
    </location>
</feature>
<feature type="binding site" evidence="1">
    <location>
        <position position="21"/>
    </location>
    <ligand>
        <name>3-dehydroquinate</name>
        <dbReference type="ChEBI" id="CHEBI:32364"/>
    </ligand>
</feature>
<feature type="binding site" evidence="1">
    <location>
        <begin position="46"/>
        <end position="48"/>
    </location>
    <ligand>
        <name>3-dehydroquinate</name>
        <dbReference type="ChEBI" id="CHEBI:32364"/>
    </ligand>
</feature>
<feature type="binding site" evidence="1">
    <location>
        <position position="82"/>
    </location>
    <ligand>
        <name>3-dehydroquinate</name>
        <dbReference type="ChEBI" id="CHEBI:32364"/>
    </ligand>
</feature>
<feature type="binding site" evidence="1">
    <location>
        <position position="213"/>
    </location>
    <ligand>
        <name>3-dehydroquinate</name>
        <dbReference type="ChEBI" id="CHEBI:32364"/>
    </ligand>
</feature>
<feature type="binding site" evidence="1">
    <location>
        <position position="232"/>
    </location>
    <ligand>
        <name>3-dehydroquinate</name>
        <dbReference type="ChEBI" id="CHEBI:32364"/>
    </ligand>
</feature>
<feature type="binding site" evidence="1">
    <location>
        <position position="236"/>
    </location>
    <ligand>
        <name>3-dehydroquinate</name>
        <dbReference type="ChEBI" id="CHEBI:32364"/>
    </ligand>
</feature>